<gene>
    <name type="primary">STR2</name>
    <name type="synonym">RDH2</name>
    <name type="ordered locus">At1g16460</name>
    <name type="ORF">F3O9.26</name>
</gene>
<sequence length="342" mass="37412">MKRAFSSQLRSAYPASKSTHFGRVMASSGSEAKANYAPISTNEPVVSVDWLHSNLGDADIKVLDASWYMAHEQRNPIQEYQVAHIPGALFFDLNGIADRKTNLRHMLPSEEAFAAGCSALGIENNDGVVVYDGMGLFSAARVWWMFRVFGHDKVWVLDGGLPKWRASGYDVESSVSNDAILKASAATEAIEKIYQGQTISPITFQTKFRPHLVLALDQVKENIEDKTYQHIDARSKARFDGIAPEPWKGLPSGHIPGSKCVPFPLMFDSSQTLLPAEELKKQFEQEDISLDSPIAASCGTGVTACILALGLYRLGKTNVAIYDGSWTEWATAPNLPIVGSSS</sequence>
<organism>
    <name type="scientific">Arabidopsis thaliana</name>
    <name type="common">Mouse-ear cress</name>
    <dbReference type="NCBI Taxonomy" id="3702"/>
    <lineage>
        <taxon>Eukaryota</taxon>
        <taxon>Viridiplantae</taxon>
        <taxon>Streptophyta</taxon>
        <taxon>Embryophyta</taxon>
        <taxon>Tracheophyta</taxon>
        <taxon>Spermatophyta</taxon>
        <taxon>Magnoliopsida</taxon>
        <taxon>eudicotyledons</taxon>
        <taxon>Gunneridae</taxon>
        <taxon>Pentapetalae</taxon>
        <taxon>rosids</taxon>
        <taxon>malvids</taxon>
        <taxon>Brassicales</taxon>
        <taxon>Brassicaceae</taxon>
        <taxon>Camelineae</taxon>
        <taxon>Arabidopsis</taxon>
    </lineage>
</organism>
<reference key="1">
    <citation type="journal article" date="2000" name="FEBS Lett.">
        <title>Evidence for the existence of rhodanese (thiosulfate:cyanide sulfurtransferase) in plants: preliminary characterization of two rhodanese cDNAs from Arabidopsis thaliana.</title>
        <authorList>
            <person name="Hatzfeld Y."/>
            <person name="Saito K."/>
        </authorList>
    </citation>
    <scope>NUCLEOTIDE SEQUENCE [MRNA] (ISOFORM 2)</scope>
    <scope>SUBCELLULAR LOCATION</scope>
    <source>
        <strain>cv. Columbia</strain>
    </source>
</reference>
<reference key="2">
    <citation type="journal article" date="2000" name="Eur. J. Biochem.">
        <title>Characterization of two sulfurtransferase isozymes from Arabidopsis thaliana.</title>
        <authorList>
            <person name="Papenbrock J."/>
            <person name="Schmidt A."/>
        </authorList>
    </citation>
    <scope>NUCLEOTIDE SEQUENCE [MRNA] (ISOFORM 1)</scope>
</reference>
<reference key="3">
    <citation type="journal article" date="2000" name="Eur. J. Biochem.">
        <title>Plant mercaptopyruvate sulfurtransferases: molecular cloning, subcellular localization and enzymatic activities.</title>
        <authorList>
            <person name="Nakamura T."/>
            <person name="Yamaguchi Y."/>
            <person name="Sano H."/>
        </authorList>
    </citation>
    <scope>NUCLEOTIDE SEQUENCE [MRNA] (ISOFORM 2)</scope>
    <scope>FUNCTION</scope>
    <scope>CATALYTIC ACTIVITY</scope>
    <scope>BIOPHYSICOCHEMICAL PROPERTIES</scope>
    <scope>SUBCELLULAR LOCATION</scope>
    <scope>TISSUE SPECIFICITY</scope>
    <source>
        <strain>cv. Columbia</strain>
    </source>
</reference>
<reference key="4">
    <citation type="journal article" date="2000" name="Nature">
        <title>Sequence and analysis of chromosome 1 of the plant Arabidopsis thaliana.</title>
        <authorList>
            <person name="Theologis A."/>
            <person name="Ecker J.R."/>
            <person name="Palm C.J."/>
            <person name="Federspiel N.A."/>
            <person name="Kaul S."/>
            <person name="White O."/>
            <person name="Alonso J."/>
            <person name="Altafi H."/>
            <person name="Araujo R."/>
            <person name="Bowman C.L."/>
            <person name="Brooks S.Y."/>
            <person name="Buehler E."/>
            <person name="Chan A."/>
            <person name="Chao Q."/>
            <person name="Chen H."/>
            <person name="Cheuk R.F."/>
            <person name="Chin C.W."/>
            <person name="Chung M.K."/>
            <person name="Conn L."/>
            <person name="Conway A.B."/>
            <person name="Conway A.R."/>
            <person name="Creasy T.H."/>
            <person name="Dewar K."/>
            <person name="Dunn P."/>
            <person name="Etgu P."/>
            <person name="Feldblyum T.V."/>
            <person name="Feng J.-D."/>
            <person name="Fong B."/>
            <person name="Fujii C.Y."/>
            <person name="Gill J.E."/>
            <person name="Goldsmith A.D."/>
            <person name="Haas B."/>
            <person name="Hansen N.F."/>
            <person name="Hughes B."/>
            <person name="Huizar L."/>
            <person name="Hunter J.L."/>
            <person name="Jenkins J."/>
            <person name="Johnson-Hopson C."/>
            <person name="Khan S."/>
            <person name="Khaykin E."/>
            <person name="Kim C.J."/>
            <person name="Koo H.L."/>
            <person name="Kremenetskaia I."/>
            <person name="Kurtz D.B."/>
            <person name="Kwan A."/>
            <person name="Lam B."/>
            <person name="Langin-Hooper S."/>
            <person name="Lee A."/>
            <person name="Lee J.M."/>
            <person name="Lenz C.A."/>
            <person name="Li J.H."/>
            <person name="Li Y.-P."/>
            <person name="Lin X."/>
            <person name="Liu S.X."/>
            <person name="Liu Z.A."/>
            <person name="Luros J.S."/>
            <person name="Maiti R."/>
            <person name="Marziali A."/>
            <person name="Militscher J."/>
            <person name="Miranda M."/>
            <person name="Nguyen M."/>
            <person name="Nierman W.C."/>
            <person name="Osborne B.I."/>
            <person name="Pai G."/>
            <person name="Peterson J."/>
            <person name="Pham P.K."/>
            <person name="Rizzo M."/>
            <person name="Rooney T."/>
            <person name="Rowley D."/>
            <person name="Sakano H."/>
            <person name="Salzberg S.L."/>
            <person name="Schwartz J.R."/>
            <person name="Shinn P."/>
            <person name="Southwick A.M."/>
            <person name="Sun H."/>
            <person name="Tallon L.J."/>
            <person name="Tambunga G."/>
            <person name="Toriumi M.J."/>
            <person name="Town C.D."/>
            <person name="Utterback T."/>
            <person name="Van Aken S."/>
            <person name="Vaysberg M."/>
            <person name="Vysotskaia V.S."/>
            <person name="Walker M."/>
            <person name="Wu D."/>
            <person name="Yu G."/>
            <person name="Fraser C.M."/>
            <person name="Venter J.C."/>
            <person name="Davis R.W."/>
        </authorList>
    </citation>
    <scope>NUCLEOTIDE SEQUENCE [LARGE SCALE GENOMIC DNA]</scope>
    <source>
        <strain>cv. Columbia</strain>
    </source>
</reference>
<reference key="5">
    <citation type="journal article" date="2017" name="Plant J.">
        <title>Araport11: a complete reannotation of the Arabidopsis thaliana reference genome.</title>
        <authorList>
            <person name="Cheng C.Y."/>
            <person name="Krishnakumar V."/>
            <person name="Chan A.P."/>
            <person name="Thibaud-Nissen F."/>
            <person name="Schobel S."/>
            <person name="Town C.D."/>
        </authorList>
    </citation>
    <scope>GENOME REANNOTATION</scope>
    <source>
        <strain>cv. Columbia</strain>
    </source>
</reference>
<reference key="6">
    <citation type="submission" date="2006-03" db="EMBL/GenBank/DDBJ databases">
        <title>Arabidopsis ORF clones.</title>
        <authorList>
            <person name="Shinn P."/>
            <person name="Chen H."/>
            <person name="Kim C.J."/>
            <person name="Ecker J.R."/>
        </authorList>
    </citation>
    <scope>NUCLEOTIDE SEQUENCE [MRNA] (ISOFORM 1)</scope>
    <source>
        <strain>cv. Columbia</strain>
    </source>
</reference>
<reference key="7">
    <citation type="submission" date="2006-07" db="EMBL/GenBank/DDBJ databases">
        <title>Large-scale analysis of RIKEN Arabidopsis full-length (RAFL) cDNAs.</title>
        <authorList>
            <person name="Totoki Y."/>
            <person name="Seki M."/>
            <person name="Ishida J."/>
            <person name="Nakajima M."/>
            <person name="Enju A."/>
            <person name="Kamiya A."/>
            <person name="Narusaka M."/>
            <person name="Shin-i T."/>
            <person name="Nakagawa M."/>
            <person name="Sakamoto N."/>
            <person name="Oishi K."/>
            <person name="Kohara Y."/>
            <person name="Kobayashi M."/>
            <person name="Toyoda A."/>
            <person name="Sakaki Y."/>
            <person name="Sakurai T."/>
            <person name="Iida K."/>
            <person name="Akiyama K."/>
            <person name="Satou M."/>
            <person name="Toyoda T."/>
            <person name="Konagaya A."/>
            <person name="Carninci P."/>
            <person name="Kawai J."/>
            <person name="Hayashizaki Y."/>
            <person name="Shinozaki K."/>
        </authorList>
    </citation>
    <scope>NUCLEOTIDE SEQUENCE [LARGE SCALE MRNA] (ISOFORM 2)</scope>
    <source>
        <strain>cv. Columbia</strain>
    </source>
</reference>
<reference key="8">
    <citation type="submission" date="2002-03" db="EMBL/GenBank/DDBJ databases">
        <title>Full-length cDNA from Arabidopsis thaliana.</title>
        <authorList>
            <person name="Brover V.V."/>
            <person name="Troukhan M.E."/>
            <person name="Alexandrov N.A."/>
            <person name="Lu Y.-P."/>
            <person name="Flavell R.B."/>
            <person name="Feldmann K.A."/>
        </authorList>
    </citation>
    <scope>NUCLEOTIDE SEQUENCE [LARGE SCALE MRNA]</scope>
</reference>
<reference key="9">
    <citation type="journal article" date="2004" name="Plant Physiol.">
        <title>Intracellular localization of Arabidopsis sulfurtransferases.</title>
        <authorList>
            <person name="Bauer M."/>
            <person name="Dietrich C."/>
            <person name="Nowak K."/>
            <person name="Sierralta W.D."/>
            <person name="Papenbrock J."/>
        </authorList>
    </citation>
    <scope>SUBCELLULAR LOCATION</scope>
</reference>
<reference key="10">
    <citation type="journal article" date="2007" name="Plant Physiol. Biochem.">
        <title>Differential expression of Arabidopsis sulfurtransferases under various growth conditions.</title>
        <authorList>
            <person name="Bartels A."/>
            <person name="Mock H.P."/>
            <person name="Papenbrock J."/>
        </authorList>
    </citation>
    <scope>GENE FAMILY</scope>
    <scope>NOMENCLATURE</scope>
</reference>
<reference key="11">
    <citation type="journal article" date="2011" name="J. Biol. Chem.">
        <title>Sulfurtransferases 1 and 2 play essential roles in embryo and seed development in Arabidopsis thaliana.</title>
        <authorList>
            <person name="Mao G."/>
            <person name="Wang R."/>
            <person name="Guan Y."/>
            <person name="Liu Y."/>
            <person name="Zhang S."/>
        </authorList>
    </citation>
    <scope>FUNCTION</scope>
    <scope>DISRUPTION PHENOTYPE</scope>
</reference>
<comment type="function">
    <text evidence="3 5">Catalyzes the transfer of a sulfur ion from a donor to cyanide or to other thiol compounds. Substrate preference is 3-mercaptopyruvate &gt; thiosulfate. Involved in embryo and seed development.</text>
</comment>
<comment type="catalytic activity">
    <reaction evidence="3">
        <text>thiosulfate + hydrogen cyanide = thiocyanate + sulfite + 2 H(+)</text>
        <dbReference type="Rhea" id="RHEA:16881"/>
        <dbReference type="ChEBI" id="CHEBI:15378"/>
        <dbReference type="ChEBI" id="CHEBI:17359"/>
        <dbReference type="ChEBI" id="CHEBI:18022"/>
        <dbReference type="ChEBI" id="CHEBI:18407"/>
        <dbReference type="ChEBI" id="CHEBI:33542"/>
        <dbReference type="EC" id="2.8.1.1"/>
    </reaction>
</comment>
<comment type="catalytic activity">
    <reaction evidence="3">
        <text>2-oxo-3-sulfanylpropanoate + [thioredoxin]-dithiol = [thioredoxin]-disulfide + hydrogen sulfide + pyruvate + H(+)</text>
        <dbReference type="Rhea" id="RHEA:21740"/>
        <dbReference type="Rhea" id="RHEA-COMP:10698"/>
        <dbReference type="Rhea" id="RHEA-COMP:10700"/>
        <dbReference type="ChEBI" id="CHEBI:15361"/>
        <dbReference type="ChEBI" id="CHEBI:15378"/>
        <dbReference type="ChEBI" id="CHEBI:29919"/>
        <dbReference type="ChEBI" id="CHEBI:29950"/>
        <dbReference type="ChEBI" id="CHEBI:50058"/>
        <dbReference type="ChEBI" id="CHEBI:57678"/>
        <dbReference type="EC" id="2.8.1.2"/>
    </reaction>
</comment>
<comment type="biophysicochemical properties">
    <kinetics>
        <KM evidence="3">5.4 mM for thiosulfate</KM>
        <KM evidence="3">72 mM for sodium mercaptopyruvate</KM>
    </kinetics>
</comment>
<comment type="subcellular location">
    <subcellularLocation>
        <location evidence="2 3 4">Cytoplasm</location>
    </subcellularLocation>
</comment>
<comment type="alternative products">
    <event type="alternative splicing"/>
    <isoform>
        <id>Q24JL3-1</id>
        <name>1</name>
        <sequence type="displayed"/>
    </isoform>
    <isoform>
        <id>Q24JL3-2</id>
        <name>2</name>
        <sequence type="described" ref="VSP_042634"/>
    </isoform>
</comment>
<comment type="tissue specificity">
    <text evidence="3">Expressed in roots, rosette and cauline leaves, stems, flowers and siliques.</text>
</comment>
<comment type="disruption phenotype">
    <text evidence="5">No visible phenotype under normal growth conditions.</text>
</comment>
<comment type="sequence caution" evidence="9">
    <conflict type="erroneous gene model prediction">
        <sequence resource="EMBL-CDS" id="AAD34697"/>
    </conflict>
</comment>
<comment type="sequence caution" evidence="9">
    <conflict type="frameshift">
        <sequence resource="EMBL-CDS" id="CAB88023"/>
    </conflict>
</comment>
<evidence type="ECO:0000255" key="1">
    <source>
        <dbReference type="PROSITE-ProRule" id="PRU00173"/>
    </source>
</evidence>
<evidence type="ECO:0000269" key="2">
    <source>
    </source>
</evidence>
<evidence type="ECO:0000269" key="3">
    <source>
    </source>
</evidence>
<evidence type="ECO:0000269" key="4">
    <source>
    </source>
</evidence>
<evidence type="ECO:0000269" key="5">
    <source>
    </source>
</evidence>
<evidence type="ECO:0000303" key="6">
    <source>
    </source>
</evidence>
<evidence type="ECO:0000303" key="7">
    <source>
    </source>
</evidence>
<evidence type="ECO:0000303" key="8">
    <source ref="7"/>
</evidence>
<evidence type="ECO:0000305" key="9"/>
<dbReference type="EC" id="2.8.1.1" evidence="3"/>
<dbReference type="EC" id="2.8.1.2" evidence="3"/>
<dbReference type="EMBL" id="AJ010500">
    <property type="protein sequence ID" value="CAB53639.1"/>
    <property type="molecule type" value="mRNA"/>
</dbReference>
<dbReference type="EMBL" id="AJ243888">
    <property type="protein sequence ID" value="CAB88023.1"/>
    <property type="status" value="ALT_FRAME"/>
    <property type="molecule type" value="mRNA"/>
</dbReference>
<dbReference type="EMBL" id="AB032865">
    <property type="protein sequence ID" value="BAA85149.1"/>
    <property type="molecule type" value="mRNA"/>
</dbReference>
<dbReference type="EMBL" id="AC006341">
    <property type="protein sequence ID" value="AAD34697.1"/>
    <property type="status" value="ALT_SEQ"/>
    <property type="molecule type" value="Genomic_DNA"/>
</dbReference>
<dbReference type="EMBL" id="CP002684">
    <property type="protein sequence ID" value="AEE29453.1"/>
    <property type="molecule type" value="Genomic_DNA"/>
</dbReference>
<dbReference type="EMBL" id="CP002684">
    <property type="protein sequence ID" value="AEE29454.1"/>
    <property type="molecule type" value="Genomic_DNA"/>
</dbReference>
<dbReference type="EMBL" id="CP002684">
    <property type="protein sequence ID" value="AEE29455.1"/>
    <property type="molecule type" value="Genomic_DNA"/>
</dbReference>
<dbReference type="EMBL" id="CP002684">
    <property type="protein sequence ID" value="AEE29456.1"/>
    <property type="molecule type" value="Genomic_DNA"/>
</dbReference>
<dbReference type="EMBL" id="BT024876">
    <property type="protein sequence ID" value="ABD85147.1"/>
    <property type="molecule type" value="mRNA"/>
</dbReference>
<dbReference type="EMBL" id="AK228907">
    <property type="protein sequence ID" value="BAF00796.1"/>
    <property type="molecule type" value="mRNA"/>
</dbReference>
<dbReference type="EMBL" id="AK229282">
    <property type="protein sequence ID" value="BAF01145.1"/>
    <property type="molecule type" value="mRNA"/>
</dbReference>
<dbReference type="EMBL" id="AY084558">
    <property type="protein sequence ID" value="AAM61125.1"/>
    <property type="molecule type" value="mRNA"/>
</dbReference>
<dbReference type="PIR" id="A86300">
    <property type="entry name" value="A86300"/>
</dbReference>
<dbReference type="PIR" id="T52655">
    <property type="entry name" value="T52655"/>
</dbReference>
<dbReference type="PIR" id="T52663">
    <property type="entry name" value="T52663"/>
</dbReference>
<dbReference type="RefSeq" id="NP_001031056.1">
    <molecule id="Q24JL3-2"/>
    <property type="nucleotide sequence ID" value="NM_001035979.1"/>
</dbReference>
<dbReference type="RefSeq" id="NP_001185012.1">
    <molecule id="Q24JL3-2"/>
    <property type="nucleotide sequence ID" value="NM_001198083.1"/>
</dbReference>
<dbReference type="RefSeq" id="NP_563998.1">
    <molecule id="Q24JL3-2"/>
    <property type="nucleotide sequence ID" value="NM_101511.6"/>
</dbReference>
<dbReference type="RefSeq" id="NP_849675.1">
    <molecule id="Q24JL3-1"/>
    <property type="nucleotide sequence ID" value="NM_179344.2"/>
</dbReference>
<dbReference type="SMR" id="Q24JL3"/>
<dbReference type="FunCoup" id="Q24JL3">
    <property type="interactions" value="2735"/>
</dbReference>
<dbReference type="STRING" id="3702.Q24JL3"/>
<dbReference type="PaxDb" id="3702-AT1G16460.2"/>
<dbReference type="ProteomicsDB" id="228365">
    <molecule id="Q24JL3-1"/>
</dbReference>
<dbReference type="EnsemblPlants" id="AT1G16460.1">
    <molecule id="Q24JL3-2"/>
    <property type="protein sequence ID" value="AT1G16460.1"/>
    <property type="gene ID" value="AT1G16460"/>
</dbReference>
<dbReference type="EnsemblPlants" id="AT1G16460.2">
    <molecule id="Q24JL3-1"/>
    <property type="protein sequence ID" value="AT1G16460.2"/>
    <property type="gene ID" value="AT1G16460"/>
</dbReference>
<dbReference type="EnsemblPlants" id="AT1G16460.3">
    <molecule id="Q24JL3-2"/>
    <property type="protein sequence ID" value="AT1G16460.3"/>
    <property type="gene ID" value="AT1G16460"/>
</dbReference>
<dbReference type="EnsemblPlants" id="AT1G16460.4">
    <molecule id="Q24JL3-2"/>
    <property type="protein sequence ID" value="AT1G16460.4"/>
    <property type="gene ID" value="AT1G16460"/>
</dbReference>
<dbReference type="GeneID" id="838216"/>
<dbReference type="Gramene" id="AT1G16460.1">
    <molecule id="Q24JL3-2"/>
    <property type="protein sequence ID" value="AT1G16460.1"/>
    <property type="gene ID" value="AT1G16460"/>
</dbReference>
<dbReference type="Gramene" id="AT1G16460.2">
    <molecule id="Q24JL3-1"/>
    <property type="protein sequence ID" value="AT1G16460.2"/>
    <property type="gene ID" value="AT1G16460"/>
</dbReference>
<dbReference type="Gramene" id="AT1G16460.3">
    <molecule id="Q24JL3-2"/>
    <property type="protein sequence ID" value="AT1G16460.3"/>
    <property type="gene ID" value="AT1G16460"/>
</dbReference>
<dbReference type="Gramene" id="AT1G16460.4">
    <molecule id="Q24JL3-2"/>
    <property type="protein sequence ID" value="AT1G16460.4"/>
    <property type="gene ID" value="AT1G16460"/>
</dbReference>
<dbReference type="KEGG" id="ath:AT1G16460"/>
<dbReference type="Araport" id="AT1G16460"/>
<dbReference type="TAIR" id="AT1G16460">
    <property type="gene designation" value="RDH2"/>
</dbReference>
<dbReference type="eggNOG" id="KOG1529">
    <property type="taxonomic scope" value="Eukaryota"/>
</dbReference>
<dbReference type="InParanoid" id="Q24JL3"/>
<dbReference type="OMA" id="WIEYSHA"/>
<dbReference type="PhylomeDB" id="Q24JL3"/>
<dbReference type="BioCyc" id="ARA:AT1G16460-MONOMER"/>
<dbReference type="BRENDA" id="2.8.1.1">
    <property type="organism ID" value="399"/>
</dbReference>
<dbReference type="BRENDA" id="2.8.1.2">
    <property type="organism ID" value="399"/>
</dbReference>
<dbReference type="SABIO-RK" id="Q24JL3"/>
<dbReference type="PRO" id="PR:Q24JL3"/>
<dbReference type="Proteomes" id="UP000006548">
    <property type="component" value="Chromosome 1"/>
</dbReference>
<dbReference type="ExpressionAtlas" id="Q24JL3">
    <property type="expression patterns" value="baseline and differential"/>
</dbReference>
<dbReference type="GO" id="GO:0005737">
    <property type="term" value="C:cytoplasm"/>
    <property type="evidence" value="ECO:0000314"/>
    <property type="project" value="TAIR"/>
</dbReference>
<dbReference type="GO" id="GO:0005829">
    <property type="term" value="C:cytosol"/>
    <property type="evidence" value="ECO:0000314"/>
    <property type="project" value="TAIR"/>
</dbReference>
<dbReference type="GO" id="GO:0016784">
    <property type="term" value="F:3-mercaptopyruvate sulfurtransferase activity"/>
    <property type="evidence" value="ECO:0000314"/>
    <property type="project" value="TAIR"/>
</dbReference>
<dbReference type="GO" id="GO:0004792">
    <property type="term" value="F:thiosulfate-cyanide sulfurtransferase activity"/>
    <property type="evidence" value="ECO:0000314"/>
    <property type="project" value="UniProtKB"/>
</dbReference>
<dbReference type="GO" id="GO:0009793">
    <property type="term" value="P:embryo development ending in seed dormancy"/>
    <property type="evidence" value="ECO:0000316"/>
    <property type="project" value="UniProtKB"/>
</dbReference>
<dbReference type="CDD" id="cd01448">
    <property type="entry name" value="TST_Repeat_1"/>
    <property type="match status" value="1"/>
</dbReference>
<dbReference type="CDD" id="cd01449">
    <property type="entry name" value="TST_Repeat_2"/>
    <property type="match status" value="1"/>
</dbReference>
<dbReference type="FunFam" id="3.40.250.10:FF:000001">
    <property type="entry name" value="Sulfurtransferase"/>
    <property type="match status" value="1"/>
</dbReference>
<dbReference type="FunFam" id="3.40.250.10:FF:000019">
    <property type="entry name" value="Sulfurtransferase"/>
    <property type="match status" value="1"/>
</dbReference>
<dbReference type="Gene3D" id="3.40.250.10">
    <property type="entry name" value="Rhodanese-like domain"/>
    <property type="match status" value="2"/>
</dbReference>
<dbReference type="InterPro" id="IPR001763">
    <property type="entry name" value="Rhodanese-like_dom"/>
</dbReference>
<dbReference type="InterPro" id="IPR036873">
    <property type="entry name" value="Rhodanese-like_dom_sf"/>
</dbReference>
<dbReference type="InterPro" id="IPR001307">
    <property type="entry name" value="Thiosulphate_STrfase_CS"/>
</dbReference>
<dbReference type="InterPro" id="IPR045078">
    <property type="entry name" value="TST/MPST-like"/>
</dbReference>
<dbReference type="PANTHER" id="PTHR11364:SF27">
    <property type="entry name" value="SULFURTRANSFERASE"/>
    <property type="match status" value="1"/>
</dbReference>
<dbReference type="PANTHER" id="PTHR11364">
    <property type="entry name" value="THIOSULFATE SULFERTANSFERASE"/>
    <property type="match status" value="1"/>
</dbReference>
<dbReference type="Pfam" id="PF00581">
    <property type="entry name" value="Rhodanese"/>
    <property type="match status" value="2"/>
</dbReference>
<dbReference type="SMART" id="SM00450">
    <property type="entry name" value="RHOD"/>
    <property type="match status" value="2"/>
</dbReference>
<dbReference type="SUPFAM" id="SSF52821">
    <property type="entry name" value="Rhodanese/Cell cycle control phosphatase"/>
    <property type="match status" value="2"/>
</dbReference>
<dbReference type="PROSITE" id="PS00380">
    <property type="entry name" value="RHODANESE_1"/>
    <property type="match status" value="1"/>
</dbReference>
<dbReference type="PROSITE" id="PS00683">
    <property type="entry name" value="RHODANESE_2"/>
    <property type="match status" value="1"/>
</dbReference>
<dbReference type="PROSITE" id="PS50206">
    <property type="entry name" value="RHODANESE_3"/>
    <property type="match status" value="2"/>
</dbReference>
<feature type="chain" id="PRO_0000416526" description="Thiosulfate/3-mercaptopyruvate sulfurtransferase 2">
    <location>
        <begin position="1"/>
        <end position="342"/>
    </location>
</feature>
<feature type="domain" description="Rhodanese 1" evidence="1">
    <location>
        <begin position="56"/>
        <end position="173"/>
    </location>
</feature>
<feature type="domain" description="Rhodanese 2" evidence="1">
    <location>
        <begin position="224"/>
        <end position="338"/>
    </location>
</feature>
<feature type="active site" description="Cysteine persulfide intermediate" evidence="1">
    <location>
        <position position="298"/>
    </location>
</feature>
<feature type="splice variant" id="VSP_042634" description="In isoform 2." evidence="6 7 8">
    <location>
        <begin position="1"/>
        <end position="24"/>
    </location>
</feature>
<feature type="sequence conflict" description="In Ref. 2; CAB88023." evidence="9" ref="2">
    <original>N</original>
    <variation>D</variation>
    <location>
        <position position="94"/>
    </location>
</feature>
<feature type="sequence conflict" description="In Ref. 2; CAB88023." evidence="9" ref="2">
    <original>NLRH</original>
    <variation>KLHP</variation>
    <location>
        <begin position="102"/>
        <end position="105"/>
    </location>
</feature>
<feature type="sequence conflict" description="In Ref. 7; BAF00796." evidence="9" ref="7">
    <original>E</original>
    <variation>G</variation>
    <location>
        <position position="278"/>
    </location>
</feature>
<feature type="sequence conflict" description="In Ref. 7; BAF00796." evidence="9" ref="7">
    <original>T</original>
    <variation>I</variation>
    <location>
        <position position="327"/>
    </location>
</feature>
<keyword id="KW-0025">Alternative splicing</keyword>
<keyword id="KW-0963">Cytoplasm</keyword>
<keyword id="KW-1185">Reference proteome</keyword>
<keyword id="KW-0677">Repeat</keyword>
<keyword id="KW-0808">Transferase</keyword>
<name>STR2_ARATH</name>
<protein>
    <recommendedName>
        <fullName>Thiosulfate/3-mercaptopyruvate sulfurtransferase 2</fullName>
        <ecNumber evidence="3">2.8.1.1</ecNumber>
        <ecNumber evidence="3">2.8.1.2</ecNumber>
    </recommendedName>
    <alternativeName>
        <fullName>Rhodanese homolog protein 2</fullName>
        <shortName>AtRDH2</shortName>
    </alternativeName>
    <alternativeName>
        <fullName>Sulfurtransferase 2</fullName>
        <shortName>AtStr2</shortName>
    </alternativeName>
</protein>
<proteinExistence type="evidence at protein level"/>
<accession>Q24JL3</accession>
<accession>Q0WQ03</accession>
<accession>Q9M4F7</accession>
<accession>Q9S7Y9</accession>
<accession>Q9SA45</accession>